<sequence>MTVGLGMPQPPAPTLAPRRATRQLMVGNVGVGSDHPVSVQSMCTTKTHDVNSTLQQIAELTAAGCDIVRVACPRQEDADALAEIARHSQIPVVADIHFQPRYIFAAIDAGCAAVRVNPGNIKEFDGRVGEVAKAAGAAGIPIRIGVNAGSLDKRFMEKYGKATPEALVESALWEASLFEEHGFGDIKISVKHNDPVVMVAAYELLAARCDYPLHLGVTEAGPAFQGTIKSAVAFGALLSRGIGDTIRVSLSAPPVEEVKVGNQVLESLNLRPRSLEIVSCPSCGRAQVDVYTLANEVTAGLDGLDVPLRVAVMGCVVNGPGEAREADLGVASGNGKGQIFVRGEVIKTVPEAQIVETLIEEAMRLAAEMGEQDPGATPSGSPIVTVS</sequence>
<evidence type="ECO:0000255" key="1">
    <source>
        <dbReference type="HAMAP-Rule" id="MF_00159"/>
    </source>
</evidence>
<name>ISPG_MYCTO</name>
<proteinExistence type="inferred from homology"/>
<keyword id="KW-0004">4Fe-4S</keyword>
<keyword id="KW-0408">Iron</keyword>
<keyword id="KW-0411">Iron-sulfur</keyword>
<keyword id="KW-0414">Isoprene biosynthesis</keyword>
<keyword id="KW-0479">Metal-binding</keyword>
<keyword id="KW-0560">Oxidoreductase</keyword>
<keyword id="KW-1185">Reference proteome</keyword>
<reference key="1">
    <citation type="journal article" date="2002" name="J. Bacteriol.">
        <title>Whole-genome comparison of Mycobacterium tuberculosis clinical and laboratory strains.</title>
        <authorList>
            <person name="Fleischmann R.D."/>
            <person name="Alland D."/>
            <person name="Eisen J.A."/>
            <person name="Carpenter L."/>
            <person name="White O."/>
            <person name="Peterson J.D."/>
            <person name="DeBoy R.T."/>
            <person name="Dodson R.J."/>
            <person name="Gwinn M.L."/>
            <person name="Haft D.H."/>
            <person name="Hickey E.K."/>
            <person name="Kolonay J.F."/>
            <person name="Nelson W.C."/>
            <person name="Umayam L.A."/>
            <person name="Ermolaeva M.D."/>
            <person name="Salzberg S.L."/>
            <person name="Delcher A."/>
            <person name="Utterback T.R."/>
            <person name="Weidman J.F."/>
            <person name="Khouri H.M."/>
            <person name="Gill J."/>
            <person name="Mikula A."/>
            <person name="Bishai W."/>
            <person name="Jacobs W.R. Jr."/>
            <person name="Venter J.C."/>
            <person name="Fraser C.M."/>
        </authorList>
    </citation>
    <scope>NUCLEOTIDE SEQUENCE [LARGE SCALE GENOMIC DNA]</scope>
    <source>
        <strain>CDC 1551 / Oshkosh</strain>
    </source>
</reference>
<protein>
    <recommendedName>
        <fullName evidence="1">4-hydroxy-3-methylbut-2-en-1-yl diphosphate synthase (flavodoxin)</fullName>
        <ecNumber evidence="1">1.17.7.3</ecNumber>
    </recommendedName>
    <alternativeName>
        <fullName evidence="1">1-hydroxy-2-methyl-2-(E)-butenyl 4-diphosphate synthase</fullName>
    </alternativeName>
</protein>
<gene>
    <name evidence="1" type="primary">ispG</name>
    <name type="synonym">gcpE</name>
    <name type="ordered locus">MT2936</name>
</gene>
<accession>P9WKG2</accession>
<accession>L0TAW0</accession>
<accession>O33350</accession>
<organism>
    <name type="scientific">Mycobacterium tuberculosis (strain CDC 1551 / Oshkosh)</name>
    <dbReference type="NCBI Taxonomy" id="83331"/>
    <lineage>
        <taxon>Bacteria</taxon>
        <taxon>Bacillati</taxon>
        <taxon>Actinomycetota</taxon>
        <taxon>Actinomycetes</taxon>
        <taxon>Mycobacteriales</taxon>
        <taxon>Mycobacteriaceae</taxon>
        <taxon>Mycobacterium</taxon>
        <taxon>Mycobacterium tuberculosis complex</taxon>
    </lineage>
</organism>
<feature type="chain" id="PRO_0000427659" description="4-hydroxy-3-methylbut-2-en-1-yl diphosphate synthase (flavodoxin)">
    <location>
        <begin position="1"/>
        <end position="387"/>
    </location>
</feature>
<feature type="binding site" evidence="1">
    <location>
        <position position="280"/>
    </location>
    <ligand>
        <name>[4Fe-4S] cluster</name>
        <dbReference type="ChEBI" id="CHEBI:49883"/>
    </ligand>
</feature>
<feature type="binding site" evidence="1">
    <location>
        <position position="283"/>
    </location>
    <ligand>
        <name>[4Fe-4S] cluster</name>
        <dbReference type="ChEBI" id="CHEBI:49883"/>
    </ligand>
</feature>
<feature type="binding site" evidence="1">
    <location>
        <position position="315"/>
    </location>
    <ligand>
        <name>[4Fe-4S] cluster</name>
        <dbReference type="ChEBI" id="CHEBI:49883"/>
    </ligand>
</feature>
<feature type="binding site" evidence="1">
    <location>
        <position position="322"/>
    </location>
    <ligand>
        <name>[4Fe-4S] cluster</name>
        <dbReference type="ChEBI" id="CHEBI:49883"/>
    </ligand>
</feature>
<comment type="function">
    <text evidence="1">Converts 2C-methyl-D-erythritol 2,4-cyclodiphosphate (ME-2,4cPP) into 1-hydroxy-2-methyl-2-(E)-butenyl 4-diphosphate.</text>
</comment>
<comment type="catalytic activity">
    <reaction evidence="1">
        <text>(2E)-4-hydroxy-3-methylbut-2-enyl diphosphate + oxidized [flavodoxin] + H2O + 2 H(+) = 2-C-methyl-D-erythritol 2,4-cyclic diphosphate + reduced [flavodoxin]</text>
        <dbReference type="Rhea" id="RHEA:43604"/>
        <dbReference type="Rhea" id="RHEA-COMP:10622"/>
        <dbReference type="Rhea" id="RHEA-COMP:10623"/>
        <dbReference type="ChEBI" id="CHEBI:15377"/>
        <dbReference type="ChEBI" id="CHEBI:15378"/>
        <dbReference type="ChEBI" id="CHEBI:57618"/>
        <dbReference type="ChEBI" id="CHEBI:58210"/>
        <dbReference type="ChEBI" id="CHEBI:58483"/>
        <dbReference type="ChEBI" id="CHEBI:128753"/>
        <dbReference type="EC" id="1.17.7.3"/>
    </reaction>
</comment>
<comment type="cofactor">
    <cofactor evidence="1">
        <name>[4Fe-4S] cluster</name>
        <dbReference type="ChEBI" id="CHEBI:49883"/>
    </cofactor>
    <text evidence="1">Binds 1 [4Fe-4S] cluster.</text>
</comment>
<comment type="pathway">
    <text evidence="1">Isoprenoid biosynthesis; isopentenyl diphosphate biosynthesis via DXP pathway; isopentenyl diphosphate from 1-deoxy-D-xylulose 5-phosphate: step 5/6.</text>
</comment>
<comment type="similarity">
    <text evidence="1">Belongs to the IspG family.</text>
</comment>
<dbReference type="EC" id="1.17.7.3" evidence="1"/>
<dbReference type="EMBL" id="AE000516">
    <property type="protein sequence ID" value="AAK47261.1"/>
    <property type="molecule type" value="Genomic_DNA"/>
</dbReference>
<dbReference type="PIR" id="F70886">
    <property type="entry name" value="F70886"/>
</dbReference>
<dbReference type="RefSeq" id="WP_003899517.1">
    <property type="nucleotide sequence ID" value="NZ_KK341227.1"/>
</dbReference>
<dbReference type="SMR" id="P9WKG2"/>
<dbReference type="KEGG" id="mtc:MT2936"/>
<dbReference type="PATRIC" id="fig|83331.31.peg.3171"/>
<dbReference type="HOGENOM" id="CLU_042258_0_0_11"/>
<dbReference type="UniPathway" id="UPA00056">
    <property type="reaction ID" value="UER00096"/>
</dbReference>
<dbReference type="Proteomes" id="UP000001020">
    <property type="component" value="Chromosome"/>
</dbReference>
<dbReference type="GO" id="GO:0051539">
    <property type="term" value="F:4 iron, 4 sulfur cluster binding"/>
    <property type="evidence" value="ECO:0007669"/>
    <property type="project" value="UniProtKB-UniRule"/>
</dbReference>
<dbReference type="GO" id="GO:0046429">
    <property type="term" value="F:4-hydroxy-3-methylbut-2-en-1-yl diphosphate synthase activity (ferredoxin)"/>
    <property type="evidence" value="ECO:0007669"/>
    <property type="project" value="UniProtKB-UniRule"/>
</dbReference>
<dbReference type="GO" id="GO:0141197">
    <property type="term" value="F:4-hydroxy-3-methylbut-2-enyl-diphosphate synthase activity (flavodoxin)"/>
    <property type="evidence" value="ECO:0007669"/>
    <property type="project" value="UniProtKB-EC"/>
</dbReference>
<dbReference type="GO" id="GO:0005506">
    <property type="term" value="F:iron ion binding"/>
    <property type="evidence" value="ECO:0007669"/>
    <property type="project" value="InterPro"/>
</dbReference>
<dbReference type="GO" id="GO:0019288">
    <property type="term" value="P:isopentenyl diphosphate biosynthetic process, methylerythritol 4-phosphate pathway"/>
    <property type="evidence" value="ECO:0007669"/>
    <property type="project" value="UniProtKB-UniRule"/>
</dbReference>
<dbReference type="GO" id="GO:0016114">
    <property type="term" value="P:terpenoid biosynthetic process"/>
    <property type="evidence" value="ECO:0007669"/>
    <property type="project" value="InterPro"/>
</dbReference>
<dbReference type="FunFam" id="3.20.20.20:FF:000003">
    <property type="entry name" value="4-hydroxy-3-methylbut-2-en-1-yl diphosphate synthase (flavodoxin)"/>
    <property type="match status" value="1"/>
</dbReference>
<dbReference type="FunFam" id="3.30.413.10:FF:000001">
    <property type="entry name" value="4-hydroxy-3-methylbut-2-en-1-yl diphosphate synthase (flavodoxin)"/>
    <property type="match status" value="1"/>
</dbReference>
<dbReference type="Gene3D" id="3.20.20.20">
    <property type="entry name" value="Dihydropteroate synthase-like"/>
    <property type="match status" value="1"/>
</dbReference>
<dbReference type="Gene3D" id="3.30.413.10">
    <property type="entry name" value="Sulfite Reductase Hemoprotein, domain 1"/>
    <property type="match status" value="1"/>
</dbReference>
<dbReference type="HAMAP" id="MF_00159">
    <property type="entry name" value="IspG"/>
    <property type="match status" value="1"/>
</dbReference>
<dbReference type="InterPro" id="IPR011005">
    <property type="entry name" value="Dihydropteroate_synth-like_sf"/>
</dbReference>
<dbReference type="InterPro" id="IPR016425">
    <property type="entry name" value="IspG_bac"/>
</dbReference>
<dbReference type="InterPro" id="IPR004588">
    <property type="entry name" value="IspG_bac-typ"/>
</dbReference>
<dbReference type="InterPro" id="IPR045854">
    <property type="entry name" value="NO2/SO3_Rdtase_4Fe4S_sf"/>
</dbReference>
<dbReference type="NCBIfam" id="TIGR00612">
    <property type="entry name" value="ispG_gcpE"/>
    <property type="match status" value="1"/>
</dbReference>
<dbReference type="NCBIfam" id="NF001540">
    <property type="entry name" value="PRK00366.1"/>
    <property type="match status" value="1"/>
</dbReference>
<dbReference type="PANTHER" id="PTHR30454">
    <property type="entry name" value="4-HYDROXY-3-METHYLBUT-2-EN-1-YL DIPHOSPHATE SYNTHASE"/>
    <property type="match status" value="1"/>
</dbReference>
<dbReference type="PANTHER" id="PTHR30454:SF0">
    <property type="entry name" value="4-HYDROXY-3-METHYLBUT-2-EN-1-YL DIPHOSPHATE SYNTHASE (FERREDOXIN), CHLOROPLASTIC"/>
    <property type="match status" value="1"/>
</dbReference>
<dbReference type="Pfam" id="PF04551">
    <property type="entry name" value="GcpE"/>
    <property type="match status" value="1"/>
</dbReference>
<dbReference type="PIRSF" id="PIRSF004640">
    <property type="entry name" value="IspG"/>
    <property type="match status" value="1"/>
</dbReference>
<dbReference type="SUPFAM" id="SSF51717">
    <property type="entry name" value="Dihydropteroate synthetase-like"/>
    <property type="match status" value="1"/>
</dbReference>
<dbReference type="SUPFAM" id="SSF56014">
    <property type="entry name" value="Nitrite and sulphite reductase 4Fe-4S domain-like"/>
    <property type="match status" value="1"/>
</dbReference>